<proteinExistence type="inferred from homology"/>
<accession>B3DVB4</accession>
<comment type="function">
    <text evidence="1">Negatively regulates transcription of bacterial ribonucleotide reductase nrd genes and operons by binding to NrdR-boxes.</text>
</comment>
<comment type="cofactor">
    <cofactor evidence="1">
        <name>Zn(2+)</name>
        <dbReference type="ChEBI" id="CHEBI:29105"/>
    </cofactor>
    <text evidence="1">Binds 1 zinc ion.</text>
</comment>
<comment type="similarity">
    <text evidence="1">Belongs to the NrdR family.</text>
</comment>
<feature type="chain" id="PRO_1000124522" description="Transcriptional repressor NrdR">
    <location>
        <begin position="1"/>
        <end position="166"/>
    </location>
</feature>
<feature type="domain" description="ATP-cone" evidence="1">
    <location>
        <begin position="49"/>
        <end position="139"/>
    </location>
</feature>
<feature type="zinc finger region" evidence="1">
    <location>
        <begin position="3"/>
        <end position="34"/>
    </location>
</feature>
<evidence type="ECO:0000255" key="1">
    <source>
        <dbReference type="HAMAP-Rule" id="MF_00440"/>
    </source>
</evidence>
<keyword id="KW-0067">ATP-binding</keyword>
<keyword id="KW-0238">DNA-binding</keyword>
<keyword id="KW-0479">Metal-binding</keyword>
<keyword id="KW-0547">Nucleotide-binding</keyword>
<keyword id="KW-0678">Repressor</keyword>
<keyword id="KW-0804">Transcription</keyword>
<keyword id="KW-0805">Transcription regulation</keyword>
<keyword id="KW-0862">Zinc</keyword>
<keyword id="KW-0863">Zinc-finger</keyword>
<dbReference type="EMBL" id="CP000975">
    <property type="protein sequence ID" value="ACD83267.1"/>
    <property type="molecule type" value="Genomic_DNA"/>
</dbReference>
<dbReference type="RefSeq" id="WP_012463549.1">
    <property type="nucleotide sequence ID" value="NC_010794.1"/>
</dbReference>
<dbReference type="SMR" id="B3DVB4"/>
<dbReference type="STRING" id="481448.Minf_1212"/>
<dbReference type="KEGG" id="min:Minf_1212"/>
<dbReference type="eggNOG" id="COG1327">
    <property type="taxonomic scope" value="Bacteria"/>
</dbReference>
<dbReference type="HOGENOM" id="CLU_108412_0_0_0"/>
<dbReference type="OrthoDB" id="9807461at2"/>
<dbReference type="Proteomes" id="UP000009149">
    <property type="component" value="Chromosome"/>
</dbReference>
<dbReference type="GO" id="GO:0005524">
    <property type="term" value="F:ATP binding"/>
    <property type="evidence" value="ECO:0007669"/>
    <property type="project" value="UniProtKB-KW"/>
</dbReference>
<dbReference type="GO" id="GO:0003677">
    <property type="term" value="F:DNA binding"/>
    <property type="evidence" value="ECO:0007669"/>
    <property type="project" value="UniProtKB-KW"/>
</dbReference>
<dbReference type="GO" id="GO:0008270">
    <property type="term" value="F:zinc ion binding"/>
    <property type="evidence" value="ECO:0007669"/>
    <property type="project" value="UniProtKB-UniRule"/>
</dbReference>
<dbReference type="GO" id="GO:0045892">
    <property type="term" value="P:negative regulation of DNA-templated transcription"/>
    <property type="evidence" value="ECO:0007669"/>
    <property type="project" value="UniProtKB-UniRule"/>
</dbReference>
<dbReference type="HAMAP" id="MF_00440">
    <property type="entry name" value="NrdR"/>
    <property type="match status" value="1"/>
</dbReference>
<dbReference type="InterPro" id="IPR005144">
    <property type="entry name" value="ATP-cone_dom"/>
</dbReference>
<dbReference type="InterPro" id="IPR055173">
    <property type="entry name" value="NrdR-like_N"/>
</dbReference>
<dbReference type="InterPro" id="IPR003796">
    <property type="entry name" value="RNR_NrdR-like"/>
</dbReference>
<dbReference type="NCBIfam" id="TIGR00244">
    <property type="entry name" value="transcriptional regulator NrdR"/>
    <property type="match status" value="1"/>
</dbReference>
<dbReference type="PANTHER" id="PTHR30455">
    <property type="entry name" value="TRANSCRIPTIONAL REPRESSOR NRDR"/>
    <property type="match status" value="1"/>
</dbReference>
<dbReference type="PANTHER" id="PTHR30455:SF2">
    <property type="entry name" value="TRANSCRIPTIONAL REPRESSOR NRDR"/>
    <property type="match status" value="1"/>
</dbReference>
<dbReference type="Pfam" id="PF03477">
    <property type="entry name" value="ATP-cone"/>
    <property type="match status" value="1"/>
</dbReference>
<dbReference type="Pfam" id="PF22811">
    <property type="entry name" value="Zn_ribbon_NrdR"/>
    <property type="match status" value="1"/>
</dbReference>
<dbReference type="PROSITE" id="PS51161">
    <property type="entry name" value="ATP_CONE"/>
    <property type="match status" value="1"/>
</dbReference>
<organism>
    <name type="scientific">Methylacidiphilum infernorum (isolate V4)</name>
    <name type="common">Methylokorus infernorum (strain V4)</name>
    <dbReference type="NCBI Taxonomy" id="481448"/>
    <lineage>
        <taxon>Bacteria</taxon>
        <taxon>Pseudomonadati</taxon>
        <taxon>Verrucomicrobiota</taxon>
        <taxon>Methylacidiphilae</taxon>
        <taxon>Methylacidiphilales</taxon>
        <taxon>Methylacidiphilaceae</taxon>
        <taxon>Methylacidiphilum (ex Ratnadevi et al. 2023)</taxon>
    </lineage>
</organism>
<gene>
    <name evidence="1" type="primary">nrdR</name>
    <name type="ordered locus">Minf_1212</name>
</gene>
<sequence length="166" mass="19207">MKCIKCGNMEDKVIDSRPIKEGKSIRRRRECLRCGYRFTTYEEVQEIELFVKKRNGSIEQFDRNKLMIGIQKALEKRPITQSQIEDFVDQIIEECSAEKSPIIPSFVIGTKVMNKLKTIDEVAFIRFASVYCKFHDAKDFMNVISELKMNEGPSKSVPMLLQASSK</sequence>
<reference key="1">
    <citation type="journal article" date="2008" name="Biol. Direct">
        <title>Complete genome sequence of the extremely acidophilic methanotroph isolate V4, Methylacidiphilum infernorum, a representative of the bacterial phylum Verrucomicrobia.</title>
        <authorList>
            <person name="Hou S."/>
            <person name="Makarova K.S."/>
            <person name="Saw J.H."/>
            <person name="Senin P."/>
            <person name="Ly B.V."/>
            <person name="Zhou Z."/>
            <person name="Ren Y."/>
            <person name="Wang J."/>
            <person name="Galperin M.Y."/>
            <person name="Omelchenko M.V."/>
            <person name="Wolf Y.I."/>
            <person name="Yutin N."/>
            <person name="Koonin E.V."/>
            <person name="Stott M.B."/>
            <person name="Mountain B.W."/>
            <person name="Crowe M.A."/>
            <person name="Smirnova A.V."/>
            <person name="Dunfield P.F."/>
            <person name="Feng L."/>
            <person name="Wang L."/>
            <person name="Alam M."/>
        </authorList>
    </citation>
    <scope>NUCLEOTIDE SEQUENCE [LARGE SCALE GENOMIC DNA]</scope>
    <source>
        <strain>Isolate V4</strain>
    </source>
</reference>
<name>NRDR_METI4</name>
<protein>
    <recommendedName>
        <fullName evidence="1">Transcriptional repressor NrdR</fullName>
    </recommendedName>
</protein>